<evidence type="ECO:0000305" key="1"/>
<name>YIAF_SHIFL</name>
<keyword id="KW-1185">Reference proteome</keyword>
<organism>
    <name type="scientific">Shigella flexneri</name>
    <dbReference type="NCBI Taxonomy" id="623"/>
    <lineage>
        <taxon>Bacteria</taxon>
        <taxon>Pseudomonadati</taxon>
        <taxon>Pseudomonadota</taxon>
        <taxon>Gammaproteobacteria</taxon>
        <taxon>Enterobacterales</taxon>
        <taxon>Enterobacteriaceae</taxon>
        <taxon>Shigella</taxon>
    </lineage>
</organism>
<gene>
    <name type="primary">yiaF</name>
    <name type="ordered locus">SF3588</name>
    <name type="ordered locus">S4181</name>
</gene>
<protein>
    <recommendedName>
        <fullName>Uncharacterized protein YiaF</fullName>
    </recommendedName>
</protein>
<reference key="1">
    <citation type="journal article" date="2002" name="Nucleic Acids Res.">
        <title>Genome sequence of Shigella flexneri 2a: insights into pathogenicity through comparison with genomes of Escherichia coli K12 and O157.</title>
        <authorList>
            <person name="Jin Q."/>
            <person name="Yuan Z."/>
            <person name="Xu J."/>
            <person name="Wang Y."/>
            <person name="Shen Y."/>
            <person name="Lu W."/>
            <person name="Wang J."/>
            <person name="Liu H."/>
            <person name="Yang J."/>
            <person name="Yang F."/>
            <person name="Zhang X."/>
            <person name="Zhang J."/>
            <person name="Yang G."/>
            <person name="Wu H."/>
            <person name="Qu D."/>
            <person name="Dong J."/>
            <person name="Sun L."/>
            <person name="Xue Y."/>
            <person name="Zhao A."/>
            <person name="Gao Y."/>
            <person name="Zhu J."/>
            <person name="Kan B."/>
            <person name="Ding K."/>
            <person name="Chen S."/>
            <person name="Cheng H."/>
            <person name="Yao Z."/>
            <person name="He B."/>
            <person name="Chen R."/>
            <person name="Ma D."/>
            <person name="Qiang B."/>
            <person name="Wen Y."/>
            <person name="Hou Y."/>
            <person name="Yu J."/>
        </authorList>
    </citation>
    <scope>NUCLEOTIDE SEQUENCE [LARGE SCALE GENOMIC DNA]</scope>
    <source>
        <strain>301 / Serotype 2a</strain>
    </source>
</reference>
<reference key="2">
    <citation type="journal article" date="2003" name="Infect. Immun.">
        <title>Complete genome sequence and comparative genomics of Shigella flexneri serotype 2a strain 2457T.</title>
        <authorList>
            <person name="Wei J."/>
            <person name="Goldberg M.B."/>
            <person name="Burland V."/>
            <person name="Venkatesan M.M."/>
            <person name="Deng W."/>
            <person name="Fournier G."/>
            <person name="Mayhew G.F."/>
            <person name="Plunkett G. III"/>
            <person name="Rose D.J."/>
            <person name="Darling A."/>
            <person name="Mau B."/>
            <person name="Perna N.T."/>
            <person name="Payne S.M."/>
            <person name="Runyen-Janecky L.J."/>
            <person name="Zhou S."/>
            <person name="Schwartz D.C."/>
            <person name="Blattner F.R."/>
        </authorList>
    </citation>
    <scope>NUCLEOTIDE SEQUENCE [LARGE SCALE GENOMIC DNA]</scope>
    <source>
        <strain>ATCC 700930 / 2457T / Serotype 2a</strain>
    </source>
</reference>
<feature type="chain" id="PRO_0000169593" description="Uncharacterized protein YiaF">
    <location>
        <begin position="1"/>
        <end position="236"/>
    </location>
</feature>
<dbReference type="EMBL" id="AE005674">
    <property type="protein sequence ID" value="AAN45039.1"/>
    <property type="status" value="ALT_INIT"/>
    <property type="molecule type" value="Genomic_DNA"/>
</dbReference>
<dbReference type="EMBL" id="AE014073">
    <property type="protein sequence ID" value="AAP19149.1"/>
    <property type="status" value="ALT_INIT"/>
    <property type="molecule type" value="Genomic_DNA"/>
</dbReference>
<dbReference type="RefSeq" id="NP_709332.1">
    <property type="nucleotide sequence ID" value="NC_004337.2"/>
</dbReference>
<dbReference type="RefSeq" id="WP_000190516.1">
    <property type="nucleotide sequence ID" value="NZ_WPGW01000020.1"/>
</dbReference>
<dbReference type="STRING" id="198214.SF3588"/>
<dbReference type="PaxDb" id="198214-SF3588"/>
<dbReference type="GeneID" id="1026310"/>
<dbReference type="KEGG" id="sfl:SF3588"/>
<dbReference type="KEGG" id="sfx:S4181"/>
<dbReference type="PATRIC" id="fig|198214.7.peg.4233"/>
<dbReference type="HOGENOM" id="CLU_086363_0_0_6"/>
<dbReference type="Proteomes" id="UP000001006">
    <property type="component" value="Chromosome"/>
</dbReference>
<dbReference type="Proteomes" id="UP000002673">
    <property type="component" value="Chromosome"/>
</dbReference>
<dbReference type="InterPro" id="IPR021413">
    <property type="entry name" value="DUF3053"/>
</dbReference>
<dbReference type="Pfam" id="PF11254">
    <property type="entry name" value="DUF3053"/>
    <property type="match status" value="1"/>
</dbReference>
<dbReference type="PROSITE" id="PS51257">
    <property type="entry name" value="PROKAR_LIPOPROTEIN"/>
    <property type="match status" value="1"/>
</dbReference>
<accession>P0ADK3</accession>
<accession>P37667</accession>
<proteinExistence type="predicted"/>
<sequence>MATGKSCSRWFAPLAALLMVVSLSGCFDKEGDQRKAFIDFLQNTVMRSGERLPTLTADQKKQFGPFVSDYAILYGYSQQVNQAMDSGLRPVVDSVNAIRVPQDYVTQSGPLREMNGSLGVLAQQLQNAKLQADAAHSALKQSDDLKPVFDQAFTKVVTTPADALQPLIPAAQTFTQQLVMVGDYIAQQGTQVSFVANGIQFPTSQQASEYNKLIAPLPAQHQAFNQAWTTAVTATQ</sequence>
<comment type="sequence caution" evidence="1">
    <conflict type="erroneous initiation">
        <sequence resource="EMBL-CDS" id="AAN45039"/>
    </conflict>
</comment>
<comment type="sequence caution" evidence="1">
    <conflict type="erroneous initiation">
        <sequence resource="EMBL-CDS" id="AAP19149"/>
    </conflict>
</comment>